<feature type="chain" id="PRO_0000454133" description="Aminoaldehyde dehydrogenase 1, peroxisomal">
    <location>
        <begin position="1"/>
        <end position="503"/>
    </location>
</feature>
<feature type="short sequence motif" description="Microbody targeting signal" evidence="2">
    <location>
        <begin position="501"/>
        <end position="503"/>
    </location>
</feature>
<feature type="active site" description="Proton acceptor" evidence="3">
    <location>
        <position position="260"/>
    </location>
</feature>
<feature type="active site" description="Nucleophile" evidence="4">
    <location>
        <position position="294"/>
    </location>
</feature>
<feature type="binding site" evidence="5 10">
    <location>
        <position position="27"/>
    </location>
    <ligand>
        <name>Na(+)</name>
        <dbReference type="ChEBI" id="CHEBI:29101"/>
    </ligand>
</feature>
<feature type="binding site" evidence="5 10">
    <location>
        <position position="28"/>
    </location>
    <ligand>
        <name>Na(+)</name>
        <dbReference type="ChEBI" id="CHEBI:29101"/>
    </ligand>
</feature>
<feature type="binding site" evidence="5 10">
    <location>
        <position position="99"/>
    </location>
    <ligand>
        <name>Na(+)</name>
        <dbReference type="ChEBI" id="CHEBI:29101"/>
    </ligand>
</feature>
<feature type="binding site" evidence="5 10">
    <location>
        <position position="189"/>
    </location>
    <ligand>
        <name>Na(+)</name>
        <dbReference type="ChEBI" id="CHEBI:29101"/>
    </ligand>
</feature>
<feature type="binding site" evidence="5 10">
    <location>
        <begin position="238"/>
        <end position="245"/>
    </location>
    <ligand>
        <name>NAD(+)</name>
        <dbReference type="ChEBI" id="CHEBI:57540"/>
    </ligand>
</feature>
<feature type="binding site" evidence="5 10">
    <location>
        <position position="294"/>
    </location>
    <ligand>
        <name>NAD(+)</name>
        <dbReference type="ChEBI" id="CHEBI:57540"/>
    </ligand>
</feature>
<feature type="binding site" evidence="5 10">
    <location>
        <position position="393"/>
    </location>
    <ligand>
        <name>NAD(+)</name>
        <dbReference type="ChEBI" id="CHEBI:57540"/>
    </ligand>
</feature>
<feature type="site" description="Transition state stabilizer" evidence="1">
    <location>
        <position position="162"/>
    </location>
</feature>
<feature type="strand" evidence="11">
    <location>
        <begin position="10"/>
        <end position="12"/>
    </location>
</feature>
<feature type="strand" evidence="11">
    <location>
        <begin position="15"/>
        <end position="17"/>
    </location>
</feature>
<feature type="strand" evidence="11">
    <location>
        <begin position="24"/>
        <end position="28"/>
    </location>
</feature>
<feature type="turn" evidence="11">
    <location>
        <begin position="30"/>
        <end position="32"/>
    </location>
</feature>
<feature type="strand" evidence="11">
    <location>
        <begin position="35"/>
        <end position="40"/>
    </location>
</feature>
<feature type="helix" evidence="11">
    <location>
        <begin position="44"/>
        <end position="58"/>
    </location>
</feature>
<feature type="turn" evidence="11">
    <location>
        <begin position="66"/>
        <end position="68"/>
    </location>
</feature>
<feature type="helix" evidence="11">
    <location>
        <begin position="71"/>
        <end position="100"/>
    </location>
</feature>
<feature type="helix" evidence="11">
    <location>
        <begin position="104"/>
        <end position="131"/>
    </location>
</feature>
<feature type="strand" evidence="11">
    <location>
        <begin position="141"/>
        <end position="151"/>
    </location>
</feature>
<feature type="strand" evidence="11">
    <location>
        <begin position="154"/>
        <end position="158"/>
    </location>
</feature>
<feature type="strand" evidence="11">
    <location>
        <begin position="161"/>
        <end position="163"/>
    </location>
</feature>
<feature type="helix" evidence="11">
    <location>
        <begin position="164"/>
        <end position="178"/>
    </location>
</feature>
<feature type="strand" evidence="11">
    <location>
        <begin position="181"/>
        <end position="185"/>
    </location>
</feature>
<feature type="helix" evidence="11">
    <location>
        <begin position="192"/>
        <end position="203"/>
    </location>
</feature>
<feature type="strand" evidence="11">
    <location>
        <begin position="210"/>
        <end position="213"/>
    </location>
</feature>
<feature type="turn" evidence="11">
    <location>
        <begin position="218"/>
        <end position="220"/>
    </location>
</feature>
<feature type="helix" evidence="11">
    <location>
        <begin position="221"/>
        <end position="227"/>
    </location>
</feature>
<feature type="strand" evidence="11">
    <location>
        <begin position="233"/>
        <end position="238"/>
    </location>
</feature>
<feature type="helix" evidence="11">
    <location>
        <begin position="240"/>
        <end position="252"/>
    </location>
</feature>
<feature type="strand" evidence="11">
    <location>
        <begin position="257"/>
        <end position="260"/>
    </location>
</feature>
<feature type="strand" evidence="11">
    <location>
        <begin position="265"/>
        <end position="269"/>
    </location>
</feature>
<feature type="strand" evidence="11">
    <location>
        <begin position="271"/>
        <end position="273"/>
    </location>
</feature>
<feature type="helix" evidence="11">
    <location>
        <begin position="275"/>
        <end position="287"/>
    </location>
</feature>
<feature type="helix" evidence="11">
    <location>
        <begin position="288"/>
        <end position="291"/>
    </location>
</feature>
<feature type="strand" evidence="11">
    <location>
        <begin position="297"/>
        <end position="303"/>
    </location>
</feature>
<feature type="turn" evidence="11">
    <location>
        <begin position="304"/>
        <end position="306"/>
    </location>
</feature>
<feature type="helix" evidence="11">
    <location>
        <begin position="307"/>
        <end position="319"/>
    </location>
</feature>
<feature type="helix" evidence="11">
    <location>
        <begin position="339"/>
        <end position="354"/>
    </location>
</feature>
<feature type="strand" evidence="11">
    <location>
        <begin position="358"/>
        <end position="361"/>
    </location>
</feature>
<feature type="strand" evidence="11">
    <location>
        <begin position="371"/>
        <end position="373"/>
    </location>
</feature>
<feature type="strand" evidence="11">
    <location>
        <begin position="378"/>
        <end position="382"/>
    </location>
</feature>
<feature type="helix" evidence="11">
    <location>
        <begin position="388"/>
        <end position="391"/>
    </location>
</feature>
<feature type="strand" evidence="11">
    <location>
        <begin position="396"/>
        <end position="406"/>
    </location>
</feature>
<feature type="helix" evidence="11">
    <location>
        <begin position="407"/>
        <end position="414"/>
    </location>
</feature>
<feature type="strand" evidence="11">
    <location>
        <begin position="424"/>
        <end position="426"/>
    </location>
</feature>
<feature type="helix" evidence="11">
    <location>
        <begin position="430"/>
        <end position="439"/>
    </location>
</feature>
<feature type="strand" evidence="11">
    <location>
        <begin position="442"/>
        <end position="449"/>
    </location>
</feature>
<feature type="helix" evidence="11">
    <location>
        <begin position="463"/>
        <end position="465"/>
    </location>
</feature>
<feature type="helix" evidence="11">
    <location>
        <begin position="472"/>
        <end position="477"/>
    </location>
</feature>
<feature type="strand" evidence="11">
    <location>
        <begin position="480"/>
        <end position="488"/>
    </location>
</feature>
<gene>
    <name evidence="8" type="primary">AMADH1</name>
</gene>
<accession>Q8VWZ1</accession>
<name>AADH1_PEA</name>
<dbReference type="EC" id="1.2.1.-" evidence="5"/>
<dbReference type="EC" id="1.2.1.19" evidence="5"/>
<dbReference type="EC" id="1.2.1.54" evidence="5"/>
<dbReference type="EMBL" id="AJ315852">
    <property type="protein sequence ID" value="CAC48392.3"/>
    <property type="molecule type" value="mRNA"/>
</dbReference>
<dbReference type="PDB" id="3IWK">
    <property type="method" value="X-ray"/>
    <property type="resolution" value="2.40 A"/>
    <property type="chains" value="A/B/C/D/E/F/G/H/I/J/K/L=1-503"/>
</dbReference>
<dbReference type="PDBsum" id="3IWK"/>
<dbReference type="SMR" id="Q8VWZ1"/>
<dbReference type="BRENDA" id="1.2.1.19">
    <property type="organism ID" value="4872"/>
</dbReference>
<dbReference type="UniPathway" id="UPA00529">
    <property type="reaction ID" value="UER00386"/>
</dbReference>
<dbReference type="EvolutionaryTrace" id="Q8VWZ1"/>
<dbReference type="GO" id="GO:0005777">
    <property type="term" value="C:peroxisome"/>
    <property type="evidence" value="ECO:0007669"/>
    <property type="project" value="UniProtKB-SubCell"/>
</dbReference>
<dbReference type="GO" id="GO:0102244">
    <property type="term" value="F:3-aminopropanal dehydrogenase (NAD+) activity"/>
    <property type="evidence" value="ECO:0007669"/>
    <property type="project" value="RHEA"/>
</dbReference>
<dbReference type="GO" id="GO:0019145">
    <property type="term" value="F:aminobutyraldehyde dehydrogenase (NAD+) activity"/>
    <property type="evidence" value="ECO:0000314"/>
    <property type="project" value="UniProtKB"/>
</dbReference>
<dbReference type="GO" id="GO:0047107">
    <property type="term" value="F:gamma-guanidinobutyraldehyde dehydrogenase (NAD+) activity"/>
    <property type="evidence" value="ECO:0000314"/>
    <property type="project" value="UniProtKB"/>
</dbReference>
<dbReference type="GO" id="GO:0000166">
    <property type="term" value="F:nucleotide binding"/>
    <property type="evidence" value="ECO:0007669"/>
    <property type="project" value="UniProtKB-KW"/>
</dbReference>
<dbReference type="GO" id="GO:0042803">
    <property type="term" value="F:protein homodimerization activity"/>
    <property type="evidence" value="ECO:0000314"/>
    <property type="project" value="UniProtKB"/>
</dbReference>
<dbReference type="GO" id="GO:0031402">
    <property type="term" value="F:sodium ion binding"/>
    <property type="evidence" value="ECO:0000314"/>
    <property type="project" value="UniProtKB"/>
</dbReference>
<dbReference type="GO" id="GO:0110095">
    <property type="term" value="P:cellular detoxification of aldehyde"/>
    <property type="evidence" value="ECO:0000314"/>
    <property type="project" value="UniProtKB"/>
</dbReference>
<dbReference type="GO" id="GO:0019285">
    <property type="term" value="P:glycine betaine biosynthetic process from choline"/>
    <property type="evidence" value="ECO:0007669"/>
    <property type="project" value="UniProtKB-UniPathway"/>
</dbReference>
<dbReference type="CDD" id="cd07110">
    <property type="entry name" value="ALDH_F10_BADH"/>
    <property type="match status" value="1"/>
</dbReference>
<dbReference type="FunFam" id="3.40.309.10:FF:000012">
    <property type="entry name" value="Betaine aldehyde dehydrogenase"/>
    <property type="match status" value="1"/>
</dbReference>
<dbReference type="FunFam" id="3.40.605.10:FF:000007">
    <property type="entry name" value="NAD/NADP-dependent betaine aldehyde dehydrogenase"/>
    <property type="match status" value="1"/>
</dbReference>
<dbReference type="Gene3D" id="3.40.605.10">
    <property type="entry name" value="Aldehyde Dehydrogenase, Chain A, domain 1"/>
    <property type="match status" value="1"/>
</dbReference>
<dbReference type="Gene3D" id="3.40.309.10">
    <property type="entry name" value="Aldehyde Dehydrogenase, Chain A, domain 2"/>
    <property type="match status" value="1"/>
</dbReference>
<dbReference type="InterPro" id="IPR016161">
    <property type="entry name" value="Ald_DH/histidinol_DH"/>
</dbReference>
<dbReference type="InterPro" id="IPR016163">
    <property type="entry name" value="Ald_DH_C"/>
</dbReference>
<dbReference type="InterPro" id="IPR016160">
    <property type="entry name" value="Ald_DH_CS_CYS"/>
</dbReference>
<dbReference type="InterPro" id="IPR029510">
    <property type="entry name" value="Ald_DH_CS_GLU"/>
</dbReference>
<dbReference type="InterPro" id="IPR016162">
    <property type="entry name" value="Ald_DH_N"/>
</dbReference>
<dbReference type="InterPro" id="IPR015590">
    <property type="entry name" value="Aldehyde_DH_dom"/>
</dbReference>
<dbReference type="PANTHER" id="PTHR43860">
    <property type="entry name" value="BETAINE ALDEHYDE DEHYDROGENASE"/>
    <property type="match status" value="1"/>
</dbReference>
<dbReference type="PANTHER" id="PTHR43860:SF9">
    <property type="entry name" value="NAD-DEPENDENT ALDEHYDE DEHYDROGENASE FAMILY PROTEIN"/>
    <property type="match status" value="1"/>
</dbReference>
<dbReference type="Pfam" id="PF00171">
    <property type="entry name" value="Aldedh"/>
    <property type="match status" value="1"/>
</dbReference>
<dbReference type="SUPFAM" id="SSF53720">
    <property type="entry name" value="ALDH-like"/>
    <property type="match status" value="1"/>
</dbReference>
<dbReference type="PROSITE" id="PS00070">
    <property type="entry name" value="ALDEHYDE_DEHYDR_CYS"/>
    <property type="match status" value="1"/>
</dbReference>
<dbReference type="PROSITE" id="PS00687">
    <property type="entry name" value="ALDEHYDE_DEHYDR_GLU"/>
    <property type="match status" value="1"/>
</dbReference>
<keyword id="KW-0002">3D-structure</keyword>
<keyword id="KW-0903">Direct protein sequencing</keyword>
<keyword id="KW-0479">Metal-binding</keyword>
<keyword id="KW-0520">NAD</keyword>
<keyword id="KW-0547">Nucleotide-binding</keyword>
<keyword id="KW-0560">Oxidoreductase</keyword>
<keyword id="KW-0576">Peroxisome</keyword>
<keyword id="KW-0915">Sodium</keyword>
<reference key="1">
    <citation type="journal article" date="2003" name="Plant Physiol. Biochem.">
        <title>Pea seedling aminoaldehyde dehydrogenase: primary structure and active site residues.</title>
        <authorList>
            <person name="Brauner F."/>
            <person name="Sebela M."/>
            <person name="Snegaroff J."/>
            <person name="Pec P."/>
            <person name="Meunier J.C."/>
        </authorList>
    </citation>
    <scope>NUCLEOTIDE SEQUENCE [MRNA]</scope>
    <scope>PROTEIN SEQUENCE OF 1-30</scope>
    <scope>FUNCTION</scope>
    <scope>CATALYTIC ACTIVITY</scope>
    <source>
        <tissue>Meristem</tissue>
    </source>
</reference>
<reference key="2">
    <citation type="journal article" date="2010" name="J. Mol. Biol.">
        <title>Structural and functional characterization of plant aminoaldehyde dehydrogenase from Pisum sativum with a broad specificity for natural and synthetic aminoaldehydes.</title>
        <authorList>
            <person name="Tylichova M."/>
            <person name="Kopecny D."/>
            <person name="Morera S."/>
            <person name="Briozzo P."/>
            <person name="Lenobel R."/>
            <person name="Snegaroff J."/>
            <person name="Sebela M."/>
        </authorList>
    </citation>
    <scope>X-RAY CRYSTALLOGRAPHY (2.40 ANGSTROMS) IN COMPLEX WITH NAD AND SODIUM ION</scope>
    <scope>FUNCTION</scope>
    <scope>CATALYTIC ACTIVITY</scope>
    <scope>BIOPHYSICOCHEMICAL PROPERTIES</scope>
    <scope>SUBUNIT</scope>
</reference>
<organism>
    <name type="scientific">Pisum sativum</name>
    <name type="common">Garden pea</name>
    <name type="synonym">Lathyrus oleraceus</name>
    <dbReference type="NCBI Taxonomy" id="3888"/>
    <lineage>
        <taxon>Eukaryota</taxon>
        <taxon>Viridiplantae</taxon>
        <taxon>Streptophyta</taxon>
        <taxon>Embryophyta</taxon>
        <taxon>Tracheophyta</taxon>
        <taxon>Spermatophyta</taxon>
        <taxon>Magnoliopsida</taxon>
        <taxon>eudicotyledons</taxon>
        <taxon>Gunneridae</taxon>
        <taxon>Pentapetalae</taxon>
        <taxon>rosids</taxon>
        <taxon>fabids</taxon>
        <taxon>Fabales</taxon>
        <taxon>Fabaceae</taxon>
        <taxon>Papilionoideae</taxon>
        <taxon>50 kb inversion clade</taxon>
        <taxon>NPAAA clade</taxon>
        <taxon>Hologalegina</taxon>
        <taxon>IRL clade</taxon>
        <taxon>Fabeae</taxon>
        <taxon>Pisum</taxon>
    </lineage>
</organism>
<evidence type="ECO:0000250" key="1">
    <source>
        <dbReference type="UniProtKB" id="P20000"/>
    </source>
</evidence>
<evidence type="ECO:0000255" key="2"/>
<evidence type="ECO:0000255" key="3">
    <source>
        <dbReference type="PROSITE-ProRule" id="PRU10007"/>
    </source>
</evidence>
<evidence type="ECO:0000255" key="4">
    <source>
        <dbReference type="PROSITE-ProRule" id="PRU10008"/>
    </source>
</evidence>
<evidence type="ECO:0000269" key="5">
    <source>
    </source>
</evidence>
<evidence type="ECO:0000269" key="6">
    <source ref="1"/>
</evidence>
<evidence type="ECO:0000303" key="7">
    <source>
    </source>
</evidence>
<evidence type="ECO:0000303" key="8">
    <source ref="1"/>
</evidence>
<evidence type="ECO:0000305" key="9"/>
<evidence type="ECO:0007744" key="10">
    <source>
        <dbReference type="PDB" id="3IWK"/>
    </source>
</evidence>
<evidence type="ECO:0007829" key="11">
    <source>
        <dbReference type="PDB" id="3IWK"/>
    </source>
</evidence>
<sequence>MAITVSSRQLFIDGEWRVPILNKRIPNINPSTENIIGDIPAATKEDVDLAVDAAKRAISRKNGRDWSAASGSLRARYLRAIAAKIKEKKDELGKLESIDCGKPLEEALADLDDVVACFEYYAGLAEELDSKQKAPISLPMDTFKSYILKEPIGVVALITPWNYPFLMATWKIAPALAAGCAAILKPSELASVTCLELGEICKEVGLPRGVLNIVTGLGHEAGASLASHPDVDKISFTGSSATGSKIMTTAAQLVKPVSLELGGKSPIVVFEDVDLDKVAEWTVFGCFFTNGQICSATSRLIVHESIAVEFVDKLVKWAENIKISDPLEEGCRLGPIVSEAQYKKVLNCISSAKSEGATILTGGRRPEHLKKGYFVEPTIITDVTTSMQIWREEVFGPVLAVKTFSTEEEAINLANDTHYGLGSAVMSNDLERCERLSKALQAGIVWINCAQPSFIQAPWGGIKRSGFGRELGEWGLENYLSVKQVTRYTSDEPWGWYQPPSKL</sequence>
<proteinExistence type="evidence at protein level"/>
<protein>
    <recommendedName>
        <fullName evidence="7">Aminoaldehyde dehydrogenase 1, peroxisomal</fullName>
        <shortName evidence="7">PsAMADH1</shortName>
        <ecNumber evidence="5">1.2.1.-</ecNumber>
    </recommendedName>
    <alternativeName>
        <fullName evidence="9">Aminobutyraldehyde dehydrogenase AMADH1</fullName>
        <ecNumber evidence="5">1.2.1.19</ecNumber>
    </alternativeName>
    <alternativeName>
        <fullName evidence="9">Gamma-guanidinobutyraldehyde dehydrogenase AMADH1</fullName>
        <ecNumber evidence="5">1.2.1.54</ecNumber>
    </alternativeName>
</protein>
<comment type="function">
    <text evidence="5 6 9">Dehydrogenase that catalyzes the oxidation of several aminoaldehydes (PubMed:20026072). Metabolizes and detoxifies aldehyde products of polyamine degradation to non-toxic amino acids (Probable). Catalyzes the oxidation of 3-aminopropanal to beta-alanine (PubMed:20026072, Ref.1). Catalyzes the oxidation of 4-aminobutanal to 4-aminobutanoate (PubMed:20026072). Catalyzes the oxidation of 4-guanidinobutanal to 4-guanidinobutanoate (PubMed:20026072).</text>
</comment>
<comment type="catalytic activity">
    <reaction evidence="5 6">
        <text>3-aminopropanal + NAD(+) + H2O = beta-alanine + NADH + 2 H(+)</text>
        <dbReference type="Rhea" id="RHEA:30695"/>
        <dbReference type="ChEBI" id="CHEBI:15377"/>
        <dbReference type="ChEBI" id="CHEBI:15378"/>
        <dbReference type="ChEBI" id="CHEBI:57540"/>
        <dbReference type="ChEBI" id="CHEBI:57945"/>
        <dbReference type="ChEBI" id="CHEBI:57966"/>
        <dbReference type="ChEBI" id="CHEBI:58374"/>
    </reaction>
    <physiologicalReaction direction="left-to-right" evidence="5 6">
        <dbReference type="Rhea" id="RHEA:30696"/>
    </physiologicalReaction>
</comment>
<comment type="catalytic activity">
    <reaction evidence="5">
        <text>4-aminobutanal + NAD(+) + H2O = 4-aminobutanoate + NADH + 2 H(+)</text>
        <dbReference type="Rhea" id="RHEA:19105"/>
        <dbReference type="ChEBI" id="CHEBI:15377"/>
        <dbReference type="ChEBI" id="CHEBI:15378"/>
        <dbReference type="ChEBI" id="CHEBI:57540"/>
        <dbReference type="ChEBI" id="CHEBI:57945"/>
        <dbReference type="ChEBI" id="CHEBI:58264"/>
        <dbReference type="ChEBI" id="CHEBI:59888"/>
        <dbReference type="EC" id="1.2.1.19"/>
    </reaction>
    <physiologicalReaction direction="left-to-right" evidence="5">
        <dbReference type="Rhea" id="RHEA:19106"/>
    </physiologicalReaction>
</comment>
<comment type="catalytic activity">
    <reaction evidence="5">
        <text>4-guanidinobutanal + NAD(+) + H2O = 4-guanidinobutanoate + NADH + 2 H(+)</text>
        <dbReference type="Rhea" id="RHEA:14381"/>
        <dbReference type="ChEBI" id="CHEBI:15377"/>
        <dbReference type="ChEBI" id="CHEBI:15378"/>
        <dbReference type="ChEBI" id="CHEBI:57486"/>
        <dbReference type="ChEBI" id="CHEBI:57540"/>
        <dbReference type="ChEBI" id="CHEBI:57854"/>
        <dbReference type="ChEBI" id="CHEBI:57945"/>
        <dbReference type="EC" id="1.2.1.54"/>
    </reaction>
    <physiologicalReaction direction="left-to-right" evidence="5">
        <dbReference type="Rhea" id="RHEA:14382"/>
    </physiologicalReaction>
</comment>
<comment type="biophysicochemical properties">
    <kinetics>
        <KM evidence="5">75 uM for 3-aminopropanal</KM>
        <KM evidence="5">170 uM for 4-aminobutanal</KM>
        <KM evidence="5">11 uM for 4-guanidinobutanal</KM>
        <KM evidence="5">40 uM for NAD(+) with 3-aminopropanal as substrate</KM>
        <Vmax evidence="5">57.0 nmol/min/mg enzyme with 3-aminopropanal as substrate</Vmax>
        <Vmax evidence="5">50.0 nmol/min/mg enzyme with 4-aminobutanal as substrate</Vmax>
        <Vmax evidence="5">68.0 nmol/min/mg enzyme with 4-guanidinobutanal as substrate</Vmax>
    </kinetics>
</comment>
<comment type="pathway">
    <text evidence="9">Amine and polyamine biosynthesis; betaine biosynthesis via choline pathway; betaine from betaine aldehyde: step 1/1.</text>
</comment>
<comment type="subunit">
    <text evidence="5">Forms homodimers.</text>
</comment>
<comment type="subcellular location">
    <subcellularLocation>
        <location evidence="2">Peroxisome</location>
    </subcellularLocation>
</comment>
<comment type="similarity">
    <text evidence="9">Belongs to the aldehyde dehydrogenase family.</text>
</comment>